<comment type="function">
    <text evidence="1">Component of the cytochrome c oxidase, the last enzyme in the mitochondrial electron transport chain which drives oxidative phosphorylation. The respiratory chain contains 3 multisubunit complexes succinate dehydrogenase (complex II, CII), ubiquinol-cytochrome c oxidoreductase (cytochrome b-c1 complex, complex III, CIII) and cytochrome c oxidase (complex IV, CIV), that cooperate to transfer electrons derived from NADH and succinate to molecular oxygen, creating an electrochemical gradient over the inner membrane that drives transmembrane transport and the ATP synthase. Cytochrome c oxidase is the component of the respiratory chain that catalyzes the reduction of oxygen to water. Electrons originating from reduced cytochrome c in the intermembrane space (IMS) are transferred via the dinuclear copper A center (CU(A)) of subunit 2 and heme A of subunit 1 to the active site in subunit 1, a binuclear center (BNC) formed by heme A3 and copper B (CU(B)). The BNC reduces molecular oxygen to 2 water molecules using 4 electrons from cytochrome c in the IMS and 4 protons from the mitochondrial matrix.</text>
</comment>
<comment type="catalytic activity">
    <reaction evidence="1">
        <text>4 Fe(II)-[cytochrome c] + O2 + 8 H(+)(in) = 4 Fe(III)-[cytochrome c] + 2 H2O + 4 H(+)(out)</text>
        <dbReference type="Rhea" id="RHEA:11436"/>
        <dbReference type="Rhea" id="RHEA-COMP:10350"/>
        <dbReference type="Rhea" id="RHEA-COMP:14399"/>
        <dbReference type="ChEBI" id="CHEBI:15377"/>
        <dbReference type="ChEBI" id="CHEBI:15378"/>
        <dbReference type="ChEBI" id="CHEBI:15379"/>
        <dbReference type="ChEBI" id="CHEBI:29033"/>
        <dbReference type="ChEBI" id="CHEBI:29034"/>
        <dbReference type="EC" id="7.1.1.9"/>
    </reaction>
    <physiologicalReaction direction="left-to-right" evidence="1">
        <dbReference type="Rhea" id="RHEA:11437"/>
    </physiologicalReaction>
</comment>
<comment type="cofactor">
    <cofactor evidence="1">
        <name>Cu cation</name>
        <dbReference type="ChEBI" id="CHEBI:23378"/>
    </cofactor>
    <text evidence="1">Binds a dinuclear copper A center per subunit.</text>
</comment>
<comment type="subunit">
    <text evidence="1">Component of the cytochrome c oxidase (complex IV, CIV), a multisubunit enzyme composed of a catalytic core of 3 subunits and several supernumerary subunits. The complex exists as a monomer or a dimer and forms supercomplexes (SCs) in the inner mitochondrial membrane with ubiquinol-cytochrome c oxidoreductase (cytochrome b-c1 complex, complex III, CIII).</text>
</comment>
<comment type="subcellular location">
    <subcellularLocation>
        <location evidence="1">Mitochondrion inner membrane</location>
        <topology evidence="1">Multi-pass membrane protein</topology>
    </subcellularLocation>
</comment>
<comment type="similarity">
    <text evidence="3">Belongs to the cytochrome c oxidase subunit 2 family.</text>
</comment>
<proteinExistence type="inferred from homology"/>
<organism>
    <name type="scientific">Locusta migratoria</name>
    <name type="common">Migratory locust</name>
    <dbReference type="NCBI Taxonomy" id="7004"/>
    <lineage>
        <taxon>Eukaryota</taxon>
        <taxon>Metazoa</taxon>
        <taxon>Ecdysozoa</taxon>
        <taxon>Arthropoda</taxon>
        <taxon>Hexapoda</taxon>
        <taxon>Insecta</taxon>
        <taxon>Pterygota</taxon>
        <taxon>Neoptera</taxon>
        <taxon>Polyneoptera</taxon>
        <taxon>Orthoptera</taxon>
        <taxon>Caelifera</taxon>
        <taxon>Acrididea</taxon>
        <taxon>Acridomorpha</taxon>
        <taxon>Acridoidea</taxon>
        <taxon>Acrididae</taxon>
        <taxon>Oedipodinae</taxon>
        <taxon>Locusta</taxon>
    </lineage>
</organism>
<name>COX2_LOCMI</name>
<dbReference type="EC" id="7.1.1.9"/>
<dbReference type="EMBL" id="X13975">
    <property type="protein sequence ID" value="CAA32153.1"/>
    <property type="molecule type" value="Genomic_DNA"/>
</dbReference>
<dbReference type="EMBL" id="X80245">
    <property type="protein sequence ID" value="CAA56539.1"/>
    <property type="molecule type" value="Genomic_DNA"/>
</dbReference>
<dbReference type="PIR" id="T11479">
    <property type="entry name" value="T11479"/>
</dbReference>
<dbReference type="RefSeq" id="NP_007292.1">
    <property type="nucleotide sequence ID" value="NC_001712.1"/>
</dbReference>
<dbReference type="SMR" id="P14573"/>
<dbReference type="GeneID" id="807963"/>
<dbReference type="CTD" id="4513"/>
<dbReference type="GO" id="GO:0005743">
    <property type="term" value="C:mitochondrial inner membrane"/>
    <property type="evidence" value="ECO:0007669"/>
    <property type="project" value="UniProtKB-SubCell"/>
</dbReference>
<dbReference type="GO" id="GO:0005507">
    <property type="term" value="F:copper ion binding"/>
    <property type="evidence" value="ECO:0007669"/>
    <property type="project" value="InterPro"/>
</dbReference>
<dbReference type="GO" id="GO:0004129">
    <property type="term" value="F:cytochrome-c oxidase activity"/>
    <property type="evidence" value="ECO:0007669"/>
    <property type="project" value="UniProtKB-EC"/>
</dbReference>
<dbReference type="GO" id="GO:0042773">
    <property type="term" value="P:ATP synthesis coupled electron transport"/>
    <property type="evidence" value="ECO:0007669"/>
    <property type="project" value="TreeGrafter"/>
</dbReference>
<dbReference type="CDD" id="cd13912">
    <property type="entry name" value="CcO_II_C"/>
    <property type="match status" value="1"/>
</dbReference>
<dbReference type="FunFam" id="2.60.40.420:FF:000001">
    <property type="entry name" value="Cytochrome c oxidase subunit 2"/>
    <property type="match status" value="1"/>
</dbReference>
<dbReference type="Gene3D" id="1.10.287.90">
    <property type="match status" value="1"/>
</dbReference>
<dbReference type="Gene3D" id="2.60.40.420">
    <property type="entry name" value="Cupredoxins - blue copper proteins"/>
    <property type="match status" value="1"/>
</dbReference>
<dbReference type="InterPro" id="IPR045187">
    <property type="entry name" value="CcO_II"/>
</dbReference>
<dbReference type="InterPro" id="IPR002429">
    <property type="entry name" value="CcO_II-like_C"/>
</dbReference>
<dbReference type="InterPro" id="IPR034210">
    <property type="entry name" value="CcO_II_C"/>
</dbReference>
<dbReference type="InterPro" id="IPR001505">
    <property type="entry name" value="Copper_CuA"/>
</dbReference>
<dbReference type="InterPro" id="IPR008972">
    <property type="entry name" value="Cupredoxin"/>
</dbReference>
<dbReference type="InterPro" id="IPR011759">
    <property type="entry name" value="Cyt_c_oxidase_su2_TM_dom"/>
</dbReference>
<dbReference type="InterPro" id="IPR036257">
    <property type="entry name" value="Cyt_c_oxidase_su2_TM_sf"/>
</dbReference>
<dbReference type="PANTHER" id="PTHR22888:SF9">
    <property type="entry name" value="CYTOCHROME C OXIDASE SUBUNIT 2"/>
    <property type="match status" value="1"/>
</dbReference>
<dbReference type="PANTHER" id="PTHR22888">
    <property type="entry name" value="CYTOCHROME C OXIDASE, SUBUNIT II"/>
    <property type="match status" value="1"/>
</dbReference>
<dbReference type="Pfam" id="PF00116">
    <property type="entry name" value="COX2"/>
    <property type="match status" value="1"/>
</dbReference>
<dbReference type="Pfam" id="PF02790">
    <property type="entry name" value="COX2_TM"/>
    <property type="match status" value="1"/>
</dbReference>
<dbReference type="PRINTS" id="PR01166">
    <property type="entry name" value="CYCOXIDASEII"/>
</dbReference>
<dbReference type="SUPFAM" id="SSF49503">
    <property type="entry name" value="Cupredoxins"/>
    <property type="match status" value="1"/>
</dbReference>
<dbReference type="SUPFAM" id="SSF81464">
    <property type="entry name" value="Cytochrome c oxidase subunit II-like, transmembrane region"/>
    <property type="match status" value="1"/>
</dbReference>
<dbReference type="PROSITE" id="PS00078">
    <property type="entry name" value="COX2"/>
    <property type="match status" value="1"/>
</dbReference>
<dbReference type="PROSITE" id="PS50857">
    <property type="entry name" value="COX2_CUA"/>
    <property type="match status" value="1"/>
</dbReference>
<dbReference type="PROSITE" id="PS50999">
    <property type="entry name" value="COX2_TM"/>
    <property type="match status" value="1"/>
</dbReference>
<gene>
    <name type="primary">COII</name>
</gene>
<sequence>MATWSNLSLQDGASPLMEQLSFFHDHTMIDLLLITMIVGYSLSYMLLTKYTNRNMLHGHLIETIWTALPAITLIFIALPSLRLLYLLDDSSDAMITIKTIGRQWYWSYEYSDFINVEFDTYMTPENELNTDEFRLLEVDNRTTLPMNTEVRVLTSASDVLHSWAVPALVLKIDATPGRLNQGMFMINRPGLFFGQCSEICGANHSFMPIVIESTSIKLFIKWLSNMM</sequence>
<protein>
    <recommendedName>
        <fullName>Cytochrome c oxidase subunit 2</fullName>
        <ecNumber>7.1.1.9</ecNumber>
    </recommendedName>
    <alternativeName>
        <fullName>Cytochrome c oxidase polypeptide II</fullName>
    </alternativeName>
</protein>
<keyword id="KW-0186">Copper</keyword>
<keyword id="KW-0249">Electron transport</keyword>
<keyword id="KW-0460">Magnesium</keyword>
<keyword id="KW-0472">Membrane</keyword>
<keyword id="KW-0479">Metal-binding</keyword>
<keyword id="KW-0496">Mitochondrion</keyword>
<keyword id="KW-0999">Mitochondrion inner membrane</keyword>
<keyword id="KW-0679">Respiratory chain</keyword>
<keyword id="KW-1278">Translocase</keyword>
<keyword id="KW-0812">Transmembrane</keyword>
<keyword id="KW-1133">Transmembrane helix</keyword>
<keyword id="KW-0813">Transport</keyword>
<feature type="chain" id="PRO_0000183621" description="Cytochrome c oxidase subunit 2">
    <location>
        <begin position="1"/>
        <end position="227"/>
    </location>
</feature>
<feature type="topological domain" description="Mitochondrial intermembrane" evidence="2">
    <location>
        <begin position="1"/>
        <end position="26"/>
    </location>
</feature>
<feature type="transmembrane region" description="Helical" evidence="2">
    <location>
        <begin position="27"/>
        <end position="48"/>
    </location>
</feature>
<feature type="topological domain" description="Mitochondrial matrix" evidence="2">
    <location>
        <begin position="49"/>
        <end position="62"/>
    </location>
</feature>
<feature type="transmembrane region" description="Helical" evidence="2">
    <location>
        <begin position="63"/>
        <end position="82"/>
    </location>
</feature>
<feature type="topological domain" description="Mitochondrial intermembrane" evidence="2">
    <location>
        <begin position="83"/>
        <end position="227"/>
    </location>
</feature>
<feature type="binding site" evidence="1">
    <location>
        <position position="161"/>
    </location>
    <ligand>
        <name>Cu cation</name>
        <dbReference type="ChEBI" id="CHEBI:23378"/>
        <label>A1</label>
    </ligand>
</feature>
<feature type="binding site" evidence="1">
    <location>
        <position position="196"/>
    </location>
    <ligand>
        <name>Cu cation</name>
        <dbReference type="ChEBI" id="CHEBI:23378"/>
        <label>A1</label>
    </ligand>
</feature>
<feature type="binding site" evidence="1">
    <location>
        <position position="196"/>
    </location>
    <ligand>
        <name>Cu cation</name>
        <dbReference type="ChEBI" id="CHEBI:23378"/>
        <label>A2</label>
    </ligand>
</feature>
<feature type="binding site" evidence="1">
    <location>
        <position position="198"/>
    </location>
    <ligand>
        <name>Cu cation</name>
        <dbReference type="ChEBI" id="CHEBI:23378"/>
        <label>A2</label>
    </ligand>
</feature>
<feature type="binding site" evidence="1">
    <location>
        <position position="198"/>
    </location>
    <ligand>
        <name>Mg(2+)</name>
        <dbReference type="ChEBI" id="CHEBI:18420"/>
        <note>ligand shared with subunit 1</note>
    </ligand>
</feature>
<feature type="binding site" evidence="1">
    <location>
        <position position="200"/>
    </location>
    <ligand>
        <name>Cu cation</name>
        <dbReference type="ChEBI" id="CHEBI:23378"/>
        <label>A1</label>
    </ligand>
</feature>
<feature type="binding site" evidence="1">
    <location>
        <position position="200"/>
    </location>
    <ligand>
        <name>Cu cation</name>
        <dbReference type="ChEBI" id="CHEBI:23378"/>
        <label>A2</label>
    </ligand>
</feature>
<feature type="binding site" evidence="1">
    <location>
        <position position="204"/>
    </location>
    <ligand>
        <name>Cu cation</name>
        <dbReference type="ChEBI" id="CHEBI:23378"/>
        <label>A2</label>
    </ligand>
</feature>
<feature type="binding site" evidence="1">
    <location>
        <position position="207"/>
    </location>
    <ligand>
        <name>Cu cation</name>
        <dbReference type="ChEBI" id="CHEBI:23378"/>
        <label>A1</label>
    </ligand>
</feature>
<evidence type="ECO:0000250" key="1">
    <source>
        <dbReference type="UniProtKB" id="P00410"/>
    </source>
</evidence>
<evidence type="ECO:0000255" key="2"/>
<evidence type="ECO:0000305" key="3"/>
<geneLocation type="mitochondrion"/>
<accession>P14573</accession>
<reference key="1">
    <citation type="journal article" date="1988" name="Curr. Genet.">
        <title>Different mitochondrial gene orders among insects: exchanged tRNA gene positions in the COII/COIII region between an orthopteran and a dipteran species.</title>
        <authorList>
            <person name="Haucke H.R."/>
            <person name="Gellissen G."/>
        </authorList>
    </citation>
    <scope>NUCLEOTIDE SEQUENCE [GENOMIC DNA]</scope>
</reference>
<reference key="2">
    <citation type="journal article" date="1995" name="J. Mol. Evol.">
        <title>The sequence, organization, and evolution of the Locusta migratoria mitochondrial genome.</title>
        <authorList>
            <person name="Flook P.K."/>
            <person name="Rowell C.H.F."/>
            <person name="Gellissen G."/>
        </authorList>
    </citation>
    <scope>NUCLEOTIDE SEQUENCE [GENOMIC DNA]</scope>
</reference>